<organism>
    <name type="scientific">Schizosaccharomyces pombe (strain 972 / ATCC 24843)</name>
    <name type="common">Fission yeast</name>
    <dbReference type="NCBI Taxonomy" id="284812"/>
    <lineage>
        <taxon>Eukaryota</taxon>
        <taxon>Fungi</taxon>
        <taxon>Dikarya</taxon>
        <taxon>Ascomycota</taxon>
        <taxon>Taphrinomycotina</taxon>
        <taxon>Schizosaccharomycetes</taxon>
        <taxon>Schizosaccharomycetales</taxon>
        <taxon>Schizosaccharomycetaceae</taxon>
        <taxon>Schizosaccharomyces</taxon>
    </lineage>
</organism>
<comment type="function">
    <text evidence="1">PPIases accelerate the folding of proteins. It catalyzes the cis-trans isomerization of proline imidic peptide bonds in oligopeptides. Acts as a regulatory subunit for PP2A-like phosphatases modulating their activity or substrate specificity, probably by inducing a conformational change in the catalytic subunit, a direct target of the PPIase. Can reactivate inactive phosphatase PP2A-phosphatase methylesterase complexes (PP2Ai) in presence of ATP and Mg(2+) by dissociating the inactive form from the complex (By similarity).</text>
</comment>
<comment type="catalytic activity">
    <reaction>
        <text>[protein]-peptidylproline (omega=180) = [protein]-peptidylproline (omega=0)</text>
        <dbReference type="Rhea" id="RHEA:16237"/>
        <dbReference type="Rhea" id="RHEA-COMP:10747"/>
        <dbReference type="Rhea" id="RHEA-COMP:10748"/>
        <dbReference type="ChEBI" id="CHEBI:83833"/>
        <dbReference type="ChEBI" id="CHEBI:83834"/>
        <dbReference type="EC" id="5.2.1.8"/>
    </reaction>
</comment>
<comment type="subcellular location">
    <subcellularLocation>
        <location evidence="1">Cytoplasm</location>
    </subcellularLocation>
    <subcellularLocation>
        <location evidence="1">Nucleus</location>
    </subcellularLocation>
</comment>
<comment type="similarity">
    <text evidence="2">Belongs to the PTPA-type PPIase family.</text>
</comment>
<dbReference type="EC" id="5.2.1.8"/>
<dbReference type="EMBL" id="CU329670">
    <property type="protein sequence ID" value="CAB11707.1"/>
    <property type="molecule type" value="Genomic_DNA"/>
</dbReference>
<dbReference type="PIR" id="T38808">
    <property type="entry name" value="T38808"/>
</dbReference>
<dbReference type="RefSeq" id="NP_594747.1">
    <property type="nucleotide sequence ID" value="NM_001020174.2"/>
</dbReference>
<dbReference type="SMR" id="O36016"/>
<dbReference type="BioGRID" id="280033">
    <property type="interactions" value="282"/>
</dbReference>
<dbReference type="FunCoup" id="O36016">
    <property type="interactions" value="210"/>
</dbReference>
<dbReference type="STRING" id="284812.O36016"/>
<dbReference type="PaxDb" id="4896-SPAC4F10.04.1"/>
<dbReference type="EnsemblFungi" id="SPAC4F10.04.1">
    <property type="protein sequence ID" value="SPAC4F10.04.1:pep"/>
    <property type="gene ID" value="SPAC4F10.04"/>
</dbReference>
<dbReference type="GeneID" id="2543619"/>
<dbReference type="KEGG" id="spo:2543619"/>
<dbReference type="PomBase" id="SPAC4F10.04"/>
<dbReference type="VEuPathDB" id="FungiDB:SPAC4F10.04"/>
<dbReference type="eggNOG" id="KOG2867">
    <property type="taxonomic scope" value="Eukaryota"/>
</dbReference>
<dbReference type="HOGENOM" id="CLU_030733_3_1_1"/>
<dbReference type="InParanoid" id="O36016"/>
<dbReference type="OMA" id="DACHISP"/>
<dbReference type="PhylomeDB" id="O36016"/>
<dbReference type="PRO" id="PR:O36016"/>
<dbReference type="Proteomes" id="UP000002485">
    <property type="component" value="Chromosome I"/>
</dbReference>
<dbReference type="GO" id="GO:0005737">
    <property type="term" value="C:cytoplasm"/>
    <property type="evidence" value="ECO:0000314"/>
    <property type="project" value="PomBase"/>
</dbReference>
<dbReference type="GO" id="GO:0005829">
    <property type="term" value="C:cytosol"/>
    <property type="evidence" value="ECO:0007005"/>
    <property type="project" value="PomBase"/>
</dbReference>
<dbReference type="GO" id="GO:0005634">
    <property type="term" value="C:nucleus"/>
    <property type="evidence" value="ECO:0007005"/>
    <property type="project" value="PomBase"/>
</dbReference>
<dbReference type="GO" id="GO:0000159">
    <property type="term" value="C:protein phosphatase type 2A complex"/>
    <property type="evidence" value="ECO:0000318"/>
    <property type="project" value="GO_Central"/>
</dbReference>
<dbReference type="GO" id="GO:0003755">
    <property type="term" value="F:peptidyl-prolyl cis-trans isomerase activity"/>
    <property type="evidence" value="ECO:0000318"/>
    <property type="project" value="GO_Central"/>
</dbReference>
<dbReference type="GO" id="GO:0008160">
    <property type="term" value="F:protein tyrosine phosphatase activator activity"/>
    <property type="evidence" value="ECO:0000318"/>
    <property type="project" value="GO_Central"/>
</dbReference>
<dbReference type="GO" id="GO:0007052">
    <property type="term" value="P:mitotic spindle organization"/>
    <property type="evidence" value="ECO:0000318"/>
    <property type="project" value="GO_Central"/>
</dbReference>
<dbReference type="GO" id="GO:0023052">
    <property type="term" value="P:signaling"/>
    <property type="evidence" value="ECO:0000303"/>
    <property type="project" value="PomBase"/>
</dbReference>
<dbReference type="CDD" id="cd04087">
    <property type="entry name" value="PTPA"/>
    <property type="match status" value="1"/>
</dbReference>
<dbReference type="FunFam" id="1.20.120.1150:FF:000003">
    <property type="entry name" value="Serine/threonine-protein phosphatase 2A activator"/>
    <property type="match status" value="1"/>
</dbReference>
<dbReference type="Gene3D" id="1.20.120.1150">
    <property type="match status" value="1"/>
</dbReference>
<dbReference type="InterPro" id="IPR004327">
    <property type="entry name" value="Phstyr_phstse_ac"/>
</dbReference>
<dbReference type="InterPro" id="IPR043170">
    <property type="entry name" value="PTPA_C_lid"/>
</dbReference>
<dbReference type="InterPro" id="IPR037218">
    <property type="entry name" value="PTPA_sf"/>
</dbReference>
<dbReference type="PANTHER" id="PTHR10012">
    <property type="entry name" value="SERINE/THREONINE-PROTEIN PHOSPHATASE 2A REGULATORY SUBUNIT B"/>
    <property type="match status" value="1"/>
</dbReference>
<dbReference type="PANTHER" id="PTHR10012:SF5">
    <property type="entry name" value="SERINE_THREONINE-PROTEIN PHOSPHATASE 2A ACTIVATOR 2"/>
    <property type="match status" value="1"/>
</dbReference>
<dbReference type="Pfam" id="PF03095">
    <property type="entry name" value="PTPA"/>
    <property type="match status" value="1"/>
</dbReference>
<dbReference type="PIRSF" id="PIRSF016325">
    <property type="entry name" value="Phstyr_phstse_ac"/>
    <property type="match status" value="1"/>
</dbReference>
<dbReference type="SUPFAM" id="SSF140984">
    <property type="entry name" value="PTPA-like"/>
    <property type="match status" value="1"/>
</dbReference>
<accession>O36016</accession>
<keyword id="KW-0963">Cytoplasm</keyword>
<keyword id="KW-0413">Isomerase</keyword>
<keyword id="KW-0539">Nucleus</keyword>
<keyword id="KW-1185">Reference proteome</keyword>
<keyword id="KW-0697">Rotamase</keyword>
<proteinExistence type="inferred from homology"/>
<reference key="1">
    <citation type="journal article" date="2002" name="Nature">
        <title>The genome sequence of Schizosaccharomyces pombe.</title>
        <authorList>
            <person name="Wood V."/>
            <person name="Gwilliam R."/>
            <person name="Rajandream M.A."/>
            <person name="Lyne M.H."/>
            <person name="Lyne R."/>
            <person name="Stewart A."/>
            <person name="Sgouros J.G."/>
            <person name="Peat N."/>
            <person name="Hayles J."/>
            <person name="Baker S.G."/>
            <person name="Basham D."/>
            <person name="Bowman S."/>
            <person name="Brooks K."/>
            <person name="Brown D."/>
            <person name="Brown S."/>
            <person name="Chillingworth T."/>
            <person name="Churcher C.M."/>
            <person name="Collins M."/>
            <person name="Connor R."/>
            <person name="Cronin A."/>
            <person name="Davis P."/>
            <person name="Feltwell T."/>
            <person name="Fraser A."/>
            <person name="Gentles S."/>
            <person name="Goble A."/>
            <person name="Hamlin N."/>
            <person name="Harris D.E."/>
            <person name="Hidalgo J."/>
            <person name="Hodgson G."/>
            <person name="Holroyd S."/>
            <person name="Hornsby T."/>
            <person name="Howarth S."/>
            <person name="Huckle E.J."/>
            <person name="Hunt S."/>
            <person name="Jagels K."/>
            <person name="James K.D."/>
            <person name="Jones L."/>
            <person name="Jones M."/>
            <person name="Leather S."/>
            <person name="McDonald S."/>
            <person name="McLean J."/>
            <person name="Mooney P."/>
            <person name="Moule S."/>
            <person name="Mungall K.L."/>
            <person name="Murphy L.D."/>
            <person name="Niblett D."/>
            <person name="Odell C."/>
            <person name="Oliver K."/>
            <person name="O'Neil S."/>
            <person name="Pearson D."/>
            <person name="Quail M.A."/>
            <person name="Rabbinowitsch E."/>
            <person name="Rutherford K.M."/>
            <person name="Rutter S."/>
            <person name="Saunders D."/>
            <person name="Seeger K."/>
            <person name="Sharp S."/>
            <person name="Skelton J."/>
            <person name="Simmonds M.N."/>
            <person name="Squares R."/>
            <person name="Squares S."/>
            <person name="Stevens K."/>
            <person name="Taylor K."/>
            <person name="Taylor R.G."/>
            <person name="Tivey A."/>
            <person name="Walsh S.V."/>
            <person name="Warren T."/>
            <person name="Whitehead S."/>
            <person name="Woodward J.R."/>
            <person name="Volckaert G."/>
            <person name="Aert R."/>
            <person name="Robben J."/>
            <person name="Grymonprez B."/>
            <person name="Weltjens I."/>
            <person name="Vanstreels E."/>
            <person name="Rieger M."/>
            <person name="Schaefer M."/>
            <person name="Mueller-Auer S."/>
            <person name="Gabel C."/>
            <person name="Fuchs M."/>
            <person name="Duesterhoeft A."/>
            <person name="Fritzc C."/>
            <person name="Holzer E."/>
            <person name="Moestl D."/>
            <person name="Hilbert H."/>
            <person name="Borzym K."/>
            <person name="Langer I."/>
            <person name="Beck A."/>
            <person name="Lehrach H."/>
            <person name="Reinhardt R."/>
            <person name="Pohl T.M."/>
            <person name="Eger P."/>
            <person name="Zimmermann W."/>
            <person name="Wedler H."/>
            <person name="Wambutt R."/>
            <person name="Purnelle B."/>
            <person name="Goffeau A."/>
            <person name="Cadieu E."/>
            <person name="Dreano S."/>
            <person name="Gloux S."/>
            <person name="Lelaure V."/>
            <person name="Mottier S."/>
            <person name="Galibert F."/>
            <person name="Aves S.J."/>
            <person name="Xiang Z."/>
            <person name="Hunt C."/>
            <person name="Moore K."/>
            <person name="Hurst S.M."/>
            <person name="Lucas M."/>
            <person name="Rochet M."/>
            <person name="Gaillardin C."/>
            <person name="Tallada V.A."/>
            <person name="Garzon A."/>
            <person name="Thode G."/>
            <person name="Daga R.R."/>
            <person name="Cruzado L."/>
            <person name="Jimenez J."/>
            <person name="Sanchez M."/>
            <person name="del Rey F."/>
            <person name="Benito J."/>
            <person name="Dominguez A."/>
            <person name="Revuelta J.L."/>
            <person name="Moreno S."/>
            <person name="Armstrong J."/>
            <person name="Forsburg S.L."/>
            <person name="Cerutti L."/>
            <person name="Lowe T."/>
            <person name="McCombie W.R."/>
            <person name="Paulsen I."/>
            <person name="Potashkin J."/>
            <person name="Shpakovski G.V."/>
            <person name="Ussery D."/>
            <person name="Barrell B.G."/>
            <person name="Nurse P."/>
        </authorList>
    </citation>
    <scope>NUCLEOTIDE SEQUENCE [LARGE SCALE GENOMIC DNA]</scope>
    <source>
        <strain>972 / ATCC 24843</strain>
    </source>
</reference>
<name>PTPA1_SCHPO</name>
<protein>
    <recommendedName>
        <fullName>Serine/threonine-protein phosphatase 2A activator 1</fullName>
        <ecNumber>5.2.1.8</ecNumber>
    </recommendedName>
    <alternativeName>
        <fullName>Peptidyl-prolyl cis-trans isomerase PTPA-1</fullName>
        <shortName>PPIase PTPA-1</shortName>
        <shortName>Rotamase PTPA-1</shortName>
    </alternativeName>
    <alternativeName>
        <fullName>Phosphotyrosyl phosphatase activator 1</fullName>
    </alternativeName>
</protein>
<feature type="chain" id="PRO_0000226103" description="Serine/threonine-protein phosphatase 2A activator 1">
    <location>
        <begin position="1"/>
        <end position="325"/>
    </location>
</feature>
<gene>
    <name type="primary">rrd1</name>
    <name type="ORF">SPAC4F10.04</name>
</gene>
<evidence type="ECO:0000250" key="1"/>
<evidence type="ECO:0000305" key="2"/>
<sequence>MQVVDEKTILELENERFDESSQFKTPEKLIVEASDMTAFRQSKAYYRIFDFLQRLNIASVGVNDYHVEYSTRVEKLVRILCRVKEITKTVPPASGRHRFGNPAFRIWHEKLRDSASQIMDIIIPDSLSKAKVELLDYFLGSFGNSQRIDFGTGHELNFLGFIKGLDLLGLLDAADYKAIALYITHVYLEVCRELVQTYRLEPAGSHGVWGLDDHFFIPYIFGSAQLADKASSSIIKPDAILNKKIVDEKANSNLYFSAIKFINVMKKGPFYEHSPILYDITAVPIWSKVNQGLIKMYDVEVLSKYPVVQHFHFGNLFPFNPLVAK</sequence>